<comment type="subcellular location">
    <subcellularLocation>
        <location evidence="1">Mitochondrion</location>
    </subcellularLocation>
</comment>
<comment type="similarity">
    <text evidence="3">Belongs to the AIM18/AIM46 family.</text>
</comment>
<feature type="transit peptide" description="Mitochondrion" evidence="2">
    <location>
        <begin position="1"/>
        <end position="72"/>
    </location>
</feature>
<feature type="chain" id="PRO_0000399559" description="Altered inheritance of mitochondria protein 18, mitochondrial">
    <location>
        <begin position="73"/>
        <end position="321"/>
    </location>
</feature>
<evidence type="ECO:0000250" key="1"/>
<evidence type="ECO:0000255" key="2"/>
<evidence type="ECO:0000305" key="3"/>
<proteinExistence type="inferred from homology"/>
<dbReference type="EMBL" id="FN393071">
    <property type="protein sequence ID" value="CAY80214.1"/>
    <property type="molecule type" value="Genomic_DNA"/>
</dbReference>
<dbReference type="SMR" id="C8Z9Z8"/>
<dbReference type="HOGENOM" id="CLU_038840_0_0_1"/>
<dbReference type="OrthoDB" id="11535at4893"/>
<dbReference type="Proteomes" id="UP000000286">
    <property type="component" value="Chromosome VIII, Scaffold EC1118_1H13"/>
</dbReference>
<dbReference type="GO" id="GO:0005739">
    <property type="term" value="C:mitochondrion"/>
    <property type="evidence" value="ECO:0007669"/>
    <property type="project" value="UniProtKB-SubCell"/>
</dbReference>
<dbReference type="GO" id="GO:0016872">
    <property type="term" value="F:intramolecular lyase activity"/>
    <property type="evidence" value="ECO:0007669"/>
    <property type="project" value="InterPro"/>
</dbReference>
<dbReference type="Gene3D" id="3.50.70.10">
    <property type="match status" value="1"/>
</dbReference>
<dbReference type="InterPro" id="IPR016087">
    <property type="entry name" value="Chalcone_isomerase"/>
</dbReference>
<dbReference type="InterPro" id="IPR016088">
    <property type="entry name" value="Chalcone_isomerase_3-sand"/>
</dbReference>
<dbReference type="InterPro" id="IPR036298">
    <property type="entry name" value="Chalcone_isomerase_sf"/>
</dbReference>
<dbReference type="PANTHER" id="PTHR47284">
    <property type="entry name" value="FATTY-ACID-BINDING PROTEIN 2"/>
    <property type="match status" value="1"/>
</dbReference>
<dbReference type="PANTHER" id="PTHR47284:SF3">
    <property type="entry name" value="FATTY-ACID-BINDING PROTEIN 2"/>
    <property type="match status" value="1"/>
</dbReference>
<dbReference type="Pfam" id="PF16035">
    <property type="entry name" value="Chalcone_2"/>
    <property type="match status" value="1"/>
</dbReference>
<dbReference type="SUPFAM" id="SSF54626">
    <property type="entry name" value="Chalcone isomerase"/>
    <property type="match status" value="1"/>
</dbReference>
<accession>C8Z9Z8</accession>
<organism>
    <name type="scientific">Saccharomyces cerevisiae (strain Lalvin EC1118 / Prise de mousse)</name>
    <name type="common">Baker's yeast</name>
    <dbReference type="NCBI Taxonomy" id="643680"/>
    <lineage>
        <taxon>Eukaryota</taxon>
        <taxon>Fungi</taxon>
        <taxon>Dikarya</taxon>
        <taxon>Ascomycota</taxon>
        <taxon>Saccharomycotina</taxon>
        <taxon>Saccharomycetes</taxon>
        <taxon>Saccharomycetales</taxon>
        <taxon>Saccharomycetaceae</taxon>
        <taxon>Saccharomyces</taxon>
    </lineage>
</organism>
<gene>
    <name type="primary">AIM18</name>
    <name type="synonym">FMP22</name>
    <name type="ORF">EC1118_1H13_1860g</name>
</gene>
<sequence>MDRGRCANMLKSLQRTLAKCQKSPSTNHWQCFKRNFTSIRATKYPGRSNSTFHYWPWFAASTLLATSLYYRDRPVQNDDKTDAFPSHTESIQVDSSVSDFPLTITALNFPVSTTFKLLGYGQRHVTFLRFKVYALGLYLAENDENLVSDTLNETYLHKYFLDVDDSKTPKENLARLLKRDDSKSVMMIDDLLDSGMRMLAKITPVRNTDFKHLKEGLVKTISKHPDVANNKDTLAKGLSELNDAFSRKGSVRKNDDLIIELLANGALQFSYHDSKNNEFEVMGVVNNQLVGKFLFSQYLCGEKSPSPQAKKTAIDKLITLL</sequence>
<keyword id="KW-0496">Mitochondrion</keyword>
<keyword id="KW-0809">Transit peptide</keyword>
<reference key="1">
    <citation type="journal article" date="2009" name="Proc. Natl. Acad. Sci. U.S.A.">
        <title>Eukaryote-to-eukaryote gene transfer events revealed by the genome sequence of the wine yeast Saccharomyces cerevisiae EC1118.</title>
        <authorList>
            <person name="Novo M."/>
            <person name="Bigey F."/>
            <person name="Beyne E."/>
            <person name="Galeote V."/>
            <person name="Gavory F."/>
            <person name="Mallet S."/>
            <person name="Cambon B."/>
            <person name="Legras J.-L."/>
            <person name="Wincker P."/>
            <person name="Casaregola S."/>
            <person name="Dequin S."/>
        </authorList>
    </citation>
    <scope>NUCLEOTIDE SEQUENCE [LARGE SCALE GENOMIC DNA]</scope>
    <source>
        <strain>Lalvin EC1118 / Prise de mousse</strain>
    </source>
</reference>
<protein>
    <recommendedName>
        <fullName>Altered inheritance of mitochondria protein 18, mitochondrial</fullName>
    </recommendedName>
</protein>
<name>AIM18_YEAS8</name>